<protein>
    <recommendedName>
        <fullName>Inactive rhomboid protein 1</fullName>
        <shortName>iRhom1</shortName>
    </recommendedName>
    <alternativeName>
        <fullName>Rhomboid family member 1</fullName>
    </alternativeName>
</protein>
<proteinExistence type="evidence at transcript level"/>
<sequence length="856" mass="97270">MGEARRDSSSSLQHKKPPWLKLDIPAVVPPAAEEPSFLQPLRRQAFLRSVSMPAEPARVPSPHQEPRRPVLQRQMSITQTIRRGTADWFGVSKDSDSTQKWQRKSIRHCSQRYGKLKPQVIRELDLPSQDNVSLTSTETPPPLYVGPCQLGMQKIVDPLARGRAFRLADDAADGPSAPHTPVTPGAASLCSFSSSRSGFNRLPRRRKRESVAKMSFRAAAALVKGRSVRDGTLRRAQRRSFTPASFLEEDTADFPDELDTSFFAREGVLHEELSTYPDEVFESPSEAALKDWERAPEQVDLTGGALDRSELERSHLMLPLERGWRKQKEGGAAAPQPKVRLRQEVVSTAGQRRGQRIAMPVRKLFAREKRPYGLGMVGRLTNRTYRKRIDSYVKRQIEDMDDHRPFFTYWLTFVHSLVTILAVCIYGVAPVGFSQHETVDSVLRNRGVYENVKYVQQENFWIGPSSEALIHLGAKFSPCMRQDPQVHSFIHAAREREKHSACCVRNDRSGCVQTSEEECSSTLAVWVKWPLHPSAPDLAGQKRRYGSVCHQDPRVCDEPSSEDPHEWPDDITKWPICTKSSAGNHTNHPHMDCVITGRPCCIGTKGRCEITSREYCDFMRGYFHEEATLCSQVHCMDDVCGLLPFLNPEVPDQFYRLWLSLFLHAGVLHCLVSVCFQMTVLRDLEKLAGWHRIAIIYLLSGVTGNLASAIFLPYRAEVGPAGSQFGILACLFVELFQSWQILARPWRAFFKLLAVVLFLFTFGLLPWIDNFAHISGFISGLFLSFAFLPYISFGKFDLYRKRCQIIVFQLVFLGLLAGLVVLFYFYPVRCEWCEFLTCIPFTDKFCEKYELDAQLH</sequence>
<gene>
    <name type="primary">RHBDF1</name>
</gene>
<evidence type="ECO:0000250" key="1">
    <source>
        <dbReference type="UniProtKB" id="Q6PIX5"/>
    </source>
</evidence>
<evidence type="ECO:0000250" key="2">
    <source>
        <dbReference type="UniProtKB" id="Q96CC6"/>
    </source>
</evidence>
<evidence type="ECO:0000255" key="3"/>
<evidence type="ECO:0000256" key="4">
    <source>
        <dbReference type="SAM" id="MobiDB-lite"/>
    </source>
</evidence>
<evidence type="ECO:0000305" key="5"/>
<reference key="1">
    <citation type="submission" date="2007-03" db="EMBL/GenBank/DDBJ databases">
        <authorList>
            <consortium name="NIH - Mammalian Gene Collection (MGC) project"/>
        </authorList>
    </citation>
    <scope>NUCLEOTIDE SEQUENCE [LARGE SCALE MRNA]</scope>
    <source>
        <strain>Crossbred X Angus</strain>
        <tissue>Ileum</tissue>
    </source>
</reference>
<comment type="function">
    <text evidence="2">Regulates ADAM17 protease, a sheddase of the epidermal growth factor (EGF) receptor ligands and TNF, thereby plays a role in sleep, cell survival, proliferation, migration and inflammation. Does not exhibit any protease activity on its own.</text>
</comment>
<comment type="subunit">
    <text evidence="2">Homodimer, or homooligomer. Interacts with TGFA and HBEGF. Interacts with EGF; may retain EGF in the endoplasmic reticulum and regulates its degradation through the endoplasmic reticulum-associated degradation (ERAD). Interacts (via cytoplasmic N-terminus) with FRMD8/iTAP; this interaction leads to mutual protein stabilization. Interacts with ADAM17/TACE.</text>
</comment>
<comment type="subcellular location">
    <subcellularLocation>
        <location evidence="2">Endoplasmic reticulum membrane</location>
        <topology evidence="3">Multi-pass membrane protein</topology>
    </subcellularLocation>
    <subcellularLocation>
        <location evidence="2">Golgi apparatus membrane</location>
        <topology evidence="3">Multi-pass membrane protein</topology>
    </subcellularLocation>
    <text evidence="2">Predominantly localized in the endoplasmic reticulum membrane.</text>
</comment>
<comment type="similarity">
    <text evidence="5">Belongs to the peptidase S54 family.</text>
</comment>
<accession>A7YWH9</accession>
<dbReference type="EMBL" id="BC134588">
    <property type="protein sequence ID" value="AAI34589.1"/>
    <property type="molecule type" value="mRNA"/>
</dbReference>
<dbReference type="RefSeq" id="NP_001098870.1">
    <property type="nucleotide sequence ID" value="NM_001105400.1"/>
</dbReference>
<dbReference type="RefSeq" id="XP_010799092.1">
    <property type="nucleotide sequence ID" value="XM_010800790.3"/>
</dbReference>
<dbReference type="RefSeq" id="XP_010799093.1">
    <property type="nucleotide sequence ID" value="XM_010800791.2"/>
</dbReference>
<dbReference type="RefSeq" id="XP_015313883.1">
    <property type="nucleotide sequence ID" value="XM_015458397.1"/>
</dbReference>
<dbReference type="RefSeq" id="XP_015313933.1">
    <property type="nucleotide sequence ID" value="XM_015458447.3"/>
</dbReference>
<dbReference type="RefSeq" id="XP_059737333.1">
    <property type="nucleotide sequence ID" value="XM_059881350.1"/>
</dbReference>
<dbReference type="SMR" id="A7YWH9"/>
<dbReference type="FunCoup" id="A7YWH9">
    <property type="interactions" value="502"/>
</dbReference>
<dbReference type="STRING" id="9913.ENSBTAP00000063017"/>
<dbReference type="MEROPS" id="S54.952"/>
<dbReference type="GlyCosmos" id="A7YWH9">
    <property type="glycosylation" value="1 site, No reported glycans"/>
</dbReference>
<dbReference type="GlyGen" id="A7YWH9">
    <property type="glycosylation" value="1 site"/>
</dbReference>
<dbReference type="PaxDb" id="9913-ENSBTAP00000026388"/>
<dbReference type="GeneID" id="529167"/>
<dbReference type="KEGG" id="bta:529167"/>
<dbReference type="CTD" id="64285"/>
<dbReference type="VEuPathDB" id="HostDB:ENSBTAG00000019805"/>
<dbReference type="eggNOG" id="KOG2290">
    <property type="taxonomic scope" value="Eukaryota"/>
</dbReference>
<dbReference type="HOGENOM" id="CLU_011531_1_1_1"/>
<dbReference type="InParanoid" id="A7YWH9"/>
<dbReference type="OMA" id="GGTENMA"/>
<dbReference type="OrthoDB" id="2146116at2759"/>
<dbReference type="TreeFam" id="TF312988"/>
<dbReference type="Proteomes" id="UP000009136">
    <property type="component" value="Chromosome 25"/>
</dbReference>
<dbReference type="Bgee" id="ENSBTAG00000019805">
    <property type="expression patterns" value="Expressed in fornix of vagina and 102 other cell types or tissues"/>
</dbReference>
<dbReference type="GO" id="GO:0005789">
    <property type="term" value="C:endoplasmic reticulum membrane"/>
    <property type="evidence" value="ECO:0000250"/>
    <property type="project" value="UniProtKB"/>
</dbReference>
<dbReference type="GO" id="GO:0000139">
    <property type="term" value="C:Golgi membrane"/>
    <property type="evidence" value="ECO:0000250"/>
    <property type="project" value="UniProtKB"/>
</dbReference>
<dbReference type="GO" id="GO:0019838">
    <property type="term" value="F:growth factor binding"/>
    <property type="evidence" value="ECO:0007669"/>
    <property type="project" value="UniProtKB-KW"/>
</dbReference>
<dbReference type="GO" id="GO:0016477">
    <property type="term" value="P:cell migration"/>
    <property type="evidence" value="ECO:0000250"/>
    <property type="project" value="UniProtKB"/>
</dbReference>
<dbReference type="GO" id="GO:0008283">
    <property type="term" value="P:cell population proliferation"/>
    <property type="evidence" value="ECO:0000250"/>
    <property type="project" value="UniProtKB"/>
</dbReference>
<dbReference type="GO" id="GO:0050709">
    <property type="term" value="P:negative regulation of protein secretion"/>
    <property type="evidence" value="ECO:0000250"/>
    <property type="project" value="UniProtKB"/>
</dbReference>
<dbReference type="GO" id="GO:0015031">
    <property type="term" value="P:protein transport"/>
    <property type="evidence" value="ECO:0007669"/>
    <property type="project" value="UniProtKB-KW"/>
</dbReference>
<dbReference type="GO" id="GO:0042058">
    <property type="term" value="P:regulation of epidermal growth factor receptor signaling pathway"/>
    <property type="evidence" value="ECO:0000250"/>
    <property type="project" value="UniProtKB"/>
</dbReference>
<dbReference type="GO" id="GO:0061136">
    <property type="term" value="P:regulation of proteasomal protein catabolic process"/>
    <property type="evidence" value="ECO:0000250"/>
    <property type="project" value="UniProtKB"/>
</dbReference>
<dbReference type="GO" id="GO:0050708">
    <property type="term" value="P:regulation of protein secretion"/>
    <property type="evidence" value="ECO:0000318"/>
    <property type="project" value="GO_Central"/>
</dbReference>
<dbReference type="FunFam" id="1.20.1540.10:FF:000001">
    <property type="entry name" value="Putative inactive rhomboid protein 1"/>
    <property type="match status" value="1"/>
</dbReference>
<dbReference type="Gene3D" id="1.20.1540.10">
    <property type="entry name" value="Rhomboid-like"/>
    <property type="match status" value="1"/>
</dbReference>
<dbReference type="InterPro" id="IPR051512">
    <property type="entry name" value="Inactive_Rhomboid"/>
</dbReference>
<dbReference type="InterPro" id="IPR022241">
    <property type="entry name" value="iRhom1_2_N"/>
</dbReference>
<dbReference type="InterPro" id="IPR022764">
    <property type="entry name" value="Peptidase_S54_rhomboid_dom"/>
</dbReference>
<dbReference type="InterPro" id="IPR035952">
    <property type="entry name" value="Rhomboid-like_sf"/>
</dbReference>
<dbReference type="PANTHER" id="PTHR45965">
    <property type="entry name" value="INACTIVE RHOMBOID PROTEIN"/>
    <property type="match status" value="1"/>
</dbReference>
<dbReference type="PANTHER" id="PTHR45965:SF4">
    <property type="entry name" value="INACTIVE RHOMBOID PROTEIN 1"/>
    <property type="match status" value="1"/>
</dbReference>
<dbReference type="Pfam" id="PF12595">
    <property type="entry name" value="iRhom1-2_N"/>
    <property type="match status" value="1"/>
</dbReference>
<dbReference type="Pfam" id="PF01694">
    <property type="entry name" value="Rhomboid"/>
    <property type="match status" value="1"/>
</dbReference>
<dbReference type="SUPFAM" id="SSF144091">
    <property type="entry name" value="Rhomboid-like"/>
    <property type="match status" value="1"/>
</dbReference>
<keyword id="KW-0256">Endoplasmic reticulum</keyword>
<keyword id="KW-0325">Glycoprotein</keyword>
<keyword id="KW-0333">Golgi apparatus</keyword>
<keyword id="KW-0340">Growth factor binding</keyword>
<keyword id="KW-0472">Membrane</keyword>
<keyword id="KW-0597">Phosphoprotein</keyword>
<keyword id="KW-0653">Protein transport</keyword>
<keyword id="KW-1185">Reference proteome</keyword>
<keyword id="KW-0812">Transmembrane</keyword>
<keyword id="KW-1133">Transmembrane helix</keyword>
<keyword id="KW-0813">Transport</keyword>
<feature type="chain" id="PRO_0000340105" description="Inactive rhomboid protein 1">
    <location>
        <begin position="1"/>
        <end position="856"/>
    </location>
</feature>
<feature type="topological domain" description="Cytoplasmic" evidence="3">
    <location>
        <begin position="1"/>
        <end position="412"/>
    </location>
</feature>
<feature type="transmembrane region" description="Helical" evidence="3">
    <location>
        <begin position="413"/>
        <end position="433"/>
    </location>
</feature>
<feature type="topological domain" description="Lumenal" evidence="3">
    <location>
        <begin position="434"/>
        <end position="656"/>
    </location>
</feature>
<feature type="transmembrane region" description="Helical" evidence="3">
    <location>
        <begin position="657"/>
        <end position="677"/>
    </location>
</feature>
<feature type="topological domain" description="Cytoplasmic" evidence="3">
    <location>
        <begin position="678"/>
        <end position="692"/>
    </location>
</feature>
<feature type="transmembrane region" description="Helical" evidence="3">
    <location>
        <begin position="693"/>
        <end position="713"/>
    </location>
</feature>
<feature type="topological domain" description="Lumenal" evidence="3">
    <location>
        <begin position="714"/>
        <end position="715"/>
    </location>
</feature>
<feature type="transmembrane region" description="Helical" evidence="3">
    <location>
        <begin position="716"/>
        <end position="736"/>
    </location>
</feature>
<feature type="topological domain" description="Cytoplasmic" evidence="3">
    <location>
        <begin position="737"/>
        <end position="747"/>
    </location>
</feature>
<feature type="transmembrane region" description="Helical" evidence="3">
    <location>
        <begin position="748"/>
        <end position="768"/>
    </location>
</feature>
<feature type="topological domain" description="Lumenal" evidence="3">
    <location>
        <begin position="769"/>
        <end position="773"/>
    </location>
</feature>
<feature type="transmembrane region" description="Helical" evidence="3">
    <location>
        <begin position="774"/>
        <end position="794"/>
    </location>
</feature>
<feature type="topological domain" description="Cytoplasmic" evidence="3">
    <location>
        <begin position="795"/>
        <end position="804"/>
    </location>
</feature>
<feature type="transmembrane region" description="Helical" evidence="3">
    <location>
        <begin position="805"/>
        <end position="825"/>
    </location>
</feature>
<feature type="topological domain" description="Lumenal" evidence="3">
    <location>
        <begin position="826"/>
        <end position="856"/>
    </location>
</feature>
<feature type="region of interest" description="Disordered" evidence="4">
    <location>
        <begin position="1"/>
        <end position="21"/>
    </location>
</feature>
<feature type="modified residue" description="Phosphoserine" evidence="2">
    <location>
        <position position="76"/>
    </location>
</feature>
<feature type="modified residue" description="Phosphoserine" evidence="1">
    <location>
        <position position="176"/>
    </location>
</feature>
<feature type="modified residue" description="Phosphothreonine" evidence="1">
    <location>
        <position position="180"/>
    </location>
</feature>
<feature type="modified residue" description="Phosphothreonine" evidence="1">
    <location>
        <position position="183"/>
    </location>
</feature>
<feature type="modified residue" description="Phosphoserine" evidence="2">
    <location>
        <position position="391"/>
    </location>
</feature>
<feature type="glycosylation site" description="N-linked (GlcNAc...) asparagine" evidence="3">
    <location>
        <position position="584"/>
    </location>
</feature>
<name>RHDF1_BOVIN</name>
<organism>
    <name type="scientific">Bos taurus</name>
    <name type="common">Bovine</name>
    <dbReference type="NCBI Taxonomy" id="9913"/>
    <lineage>
        <taxon>Eukaryota</taxon>
        <taxon>Metazoa</taxon>
        <taxon>Chordata</taxon>
        <taxon>Craniata</taxon>
        <taxon>Vertebrata</taxon>
        <taxon>Euteleostomi</taxon>
        <taxon>Mammalia</taxon>
        <taxon>Eutheria</taxon>
        <taxon>Laurasiatheria</taxon>
        <taxon>Artiodactyla</taxon>
        <taxon>Ruminantia</taxon>
        <taxon>Pecora</taxon>
        <taxon>Bovidae</taxon>
        <taxon>Bovinae</taxon>
        <taxon>Bos</taxon>
    </lineage>
</organism>